<gene>
    <name evidence="1" type="primary">metE</name>
    <name type="ordered locus">BCAH187_A4127</name>
</gene>
<feature type="chain" id="PRO_1000191192" description="5-methyltetrahydropteroyltriglutamate--homocysteine methyltransferase">
    <location>
        <begin position="1"/>
        <end position="762"/>
    </location>
</feature>
<feature type="active site" description="Proton donor" evidence="1">
    <location>
        <position position="698"/>
    </location>
</feature>
<feature type="binding site" evidence="1">
    <location>
        <begin position="17"/>
        <end position="20"/>
    </location>
    <ligand>
        <name>5-methyltetrahydropteroyltri-L-glutamate</name>
        <dbReference type="ChEBI" id="CHEBI:58207"/>
    </ligand>
</feature>
<feature type="binding site" evidence="1">
    <location>
        <position position="111"/>
    </location>
    <ligand>
        <name>5-methyltetrahydropteroyltri-L-glutamate</name>
        <dbReference type="ChEBI" id="CHEBI:58207"/>
    </ligand>
</feature>
<feature type="binding site" evidence="1">
    <location>
        <begin position="435"/>
        <end position="437"/>
    </location>
    <ligand>
        <name>L-homocysteine</name>
        <dbReference type="ChEBI" id="CHEBI:58199"/>
    </ligand>
</feature>
<feature type="binding site" evidence="1">
    <location>
        <begin position="435"/>
        <end position="437"/>
    </location>
    <ligand>
        <name>L-methionine</name>
        <dbReference type="ChEBI" id="CHEBI:57844"/>
    </ligand>
</feature>
<feature type="binding site" evidence="1">
    <location>
        <position position="488"/>
    </location>
    <ligand>
        <name>L-homocysteine</name>
        <dbReference type="ChEBI" id="CHEBI:58199"/>
    </ligand>
</feature>
<feature type="binding site" evidence="1">
    <location>
        <position position="488"/>
    </location>
    <ligand>
        <name>L-methionine</name>
        <dbReference type="ChEBI" id="CHEBI:57844"/>
    </ligand>
</feature>
<feature type="binding site" evidence="1">
    <location>
        <begin position="519"/>
        <end position="520"/>
    </location>
    <ligand>
        <name>5-methyltetrahydropteroyltri-L-glutamate</name>
        <dbReference type="ChEBI" id="CHEBI:58207"/>
    </ligand>
</feature>
<feature type="binding site" evidence="1">
    <location>
        <position position="565"/>
    </location>
    <ligand>
        <name>5-methyltetrahydropteroyltri-L-glutamate</name>
        <dbReference type="ChEBI" id="CHEBI:58207"/>
    </ligand>
</feature>
<feature type="binding site" evidence="1">
    <location>
        <position position="603"/>
    </location>
    <ligand>
        <name>L-homocysteine</name>
        <dbReference type="ChEBI" id="CHEBI:58199"/>
    </ligand>
</feature>
<feature type="binding site" evidence="1">
    <location>
        <position position="603"/>
    </location>
    <ligand>
        <name>L-methionine</name>
        <dbReference type="ChEBI" id="CHEBI:57844"/>
    </ligand>
</feature>
<feature type="binding site" evidence="1">
    <location>
        <position position="609"/>
    </location>
    <ligand>
        <name>5-methyltetrahydropteroyltri-L-glutamate</name>
        <dbReference type="ChEBI" id="CHEBI:58207"/>
    </ligand>
</feature>
<feature type="binding site" evidence="1">
    <location>
        <position position="645"/>
    </location>
    <ligand>
        <name>Zn(2+)</name>
        <dbReference type="ChEBI" id="CHEBI:29105"/>
        <note>catalytic</note>
    </ligand>
</feature>
<feature type="binding site" evidence="1">
    <location>
        <position position="647"/>
    </location>
    <ligand>
        <name>Zn(2+)</name>
        <dbReference type="ChEBI" id="CHEBI:29105"/>
        <note>catalytic</note>
    </ligand>
</feature>
<feature type="binding site" evidence="1">
    <location>
        <position position="669"/>
    </location>
    <ligand>
        <name>Zn(2+)</name>
        <dbReference type="ChEBI" id="CHEBI:29105"/>
        <note>catalytic</note>
    </ligand>
</feature>
<feature type="binding site" evidence="1">
    <location>
        <position position="730"/>
    </location>
    <ligand>
        <name>Zn(2+)</name>
        <dbReference type="ChEBI" id="CHEBI:29105"/>
        <note>catalytic</note>
    </ligand>
</feature>
<dbReference type="EC" id="2.1.1.14" evidence="1"/>
<dbReference type="EMBL" id="CP001177">
    <property type="protein sequence ID" value="ACJ77559.1"/>
    <property type="molecule type" value="Genomic_DNA"/>
</dbReference>
<dbReference type="SMR" id="B7HMX7"/>
<dbReference type="KEGG" id="bcr:BCAH187_A4127"/>
<dbReference type="HOGENOM" id="CLU_013175_0_0_9"/>
<dbReference type="UniPathway" id="UPA00051">
    <property type="reaction ID" value="UER00082"/>
</dbReference>
<dbReference type="Proteomes" id="UP000002214">
    <property type="component" value="Chromosome"/>
</dbReference>
<dbReference type="GO" id="GO:0003871">
    <property type="term" value="F:5-methyltetrahydropteroyltriglutamate-homocysteine S-methyltransferase activity"/>
    <property type="evidence" value="ECO:0007669"/>
    <property type="project" value="UniProtKB-UniRule"/>
</dbReference>
<dbReference type="GO" id="GO:0008270">
    <property type="term" value="F:zinc ion binding"/>
    <property type="evidence" value="ECO:0007669"/>
    <property type="project" value="InterPro"/>
</dbReference>
<dbReference type="GO" id="GO:0009086">
    <property type="term" value="P:methionine biosynthetic process"/>
    <property type="evidence" value="ECO:0007669"/>
    <property type="project" value="UniProtKB-UniRule"/>
</dbReference>
<dbReference type="GO" id="GO:0032259">
    <property type="term" value="P:methylation"/>
    <property type="evidence" value="ECO:0007669"/>
    <property type="project" value="UniProtKB-KW"/>
</dbReference>
<dbReference type="CDD" id="cd03311">
    <property type="entry name" value="CIMS_C_terminal_like"/>
    <property type="match status" value="1"/>
</dbReference>
<dbReference type="CDD" id="cd03312">
    <property type="entry name" value="CIMS_N_terminal_like"/>
    <property type="match status" value="1"/>
</dbReference>
<dbReference type="Gene3D" id="3.20.20.210">
    <property type="match status" value="2"/>
</dbReference>
<dbReference type="HAMAP" id="MF_00172">
    <property type="entry name" value="Meth_synth"/>
    <property type="match status" value="1"/>
</dbReference>
<dbReference type="InterPro" id="IPR013215">
    <property type="entry name" value="Cbl-indep_Met_Synth_N"/>
</dbReference>
<dbReference type="InterPro" id="IPR006276">
    <property type="entry name" value="Cobalamin-indep_Met_synthase"/>
</dbReference>
<dbReference type="InterPro" id="IPR002629">
    <property type="entry name" value="Met_Synth_C/arc"/>
</dbReference>
<dbReference type="InterPro" id="IPR038071">
    <property type="entry name" value="UROD/MetE-like_sf"/>
</dbReference>
<dbReference type="NCBIfam" id="TIGR01371">
    <property type="entry name" value="met_syn_B12ind"/>
    <property type="match status" value="1"/>
</dbReference>
<dbReference type="NCBIfam" id="NF003556">
    <property type="entry name" value="PRK05222.1"/>
    <property type="match status" value="1"/>
</dbReference>
<dbReference type="PANTHER" id="PTHR30519">
    <property type="entry name" value="5-METHYLTETRAHYDROPTEROYLTRIGLUTAMATE--HOMOCYSTEINE METHYLTRANSFERASE"/>
    <property type="match status" value="1"/>
</dbReference>
<dbReference type="Pfam" id="PF08267">
    <property type="entry name" value="Meth_synt_1"/>
    <property type="match status" value="1"/>
</dbReference>
<dbReference type="Pfam" id="PF01717">
    <property type="entry name" value="Meth_synt_2"/>
    <property type="match status" value="1"/>
</dbReference>
<dbReference type="PIRSF" id="PIRSF000382">
    <property type="entry name" value="MeTrfase_B12_ind"/>
    <property type="match status" value="1"/>
</dbReference>
<dbReference type="SUPFAM" id="SSF51726">
    <property type="entry name" value="UROD/MetE-like"/>
    <property type="match status" value="2"/>
</dbReference>
<sequence>MAIQTSNLGYPRIGLQREWKKTLEAFWSNKIDEEQFLTTMKEIRLKHVKAQQEKGIELIPIGDFTYYDHVLDTAYMLGFIPSRFSEFTSYLDVYFAMARGSKDHVASEMTKWFNTNYHYIVPEYEEGLQISLKDNRPLRLYEEAKQELGVDGKPVILGPYTFLKLAKGYTQEQFATILKQLVAPYVQLLSELHAAGAQIIQVDEPIFASLTKEEVQQAKEIYEAIRKEVPNANLLLQTYFDSVEENYEEIITFPVSSIGLDFIHGKEGNLHAISKYGFPADKTLAVGCIDGRNIWRADLDEVLTLFTTLQKQVQTKNFIVQPSCSLLHTPIDKTEETHLSTELFDALAFANQKLEELVLIHSALTQGTESIRNELETYRNVHHTIRSSAARNREDVKAARTALKEEDFSRPLPFEKRYELQQVALKLPLLPTTTIGSFPQTTEVRQTRKEWRNGVISNEQYEQFIEKETEKWIRYQEEIGLDVLVHGEFERTDMVEYFGERLAGFSFTKNGWVQSYGSRCVKPPVIYGDVAFINGMTIKETVYAQSLTEKVVKGMLTGPVTILNWSFVRNDIPRKEVSYQIALALRHEIELLESSGIRVIQVDEPALREGMPLKEKDWDAYITWAVQSFLLATSSVANETQIHTHMCYSNFEDIVDAIRALDADVISIETSRSHGEFIDTLKHTTYEKGIGLGVYDIHSPRVPSKDEMYKIVEQSLKVCDPKYFWINPDCGLKTRRTEEVIPALEHMVQAAKDARSLLKTNA</sequence>
<reference key="1">
    <citation type="submission" date="2008-10" db="EMBL/GenBank/DDBJ databases">
        <title>Genome sequence of Bacillus cereus AH187.</title>
        <authorList>
            <person name="Dodson R.J."/>
            <person name="Durkin A.S."/>
            <person name="Rosovitz M.J."/>
            <person name="Rasko D.A."/>
            <person name="Kolsto A.B."/>
            <person name="Okstad O.A."/>
            <person name="Ravel J."/>
            <person name="Sutton G."/>
        </authorList>
    </citation>
    <scope>NUCLEOTIDE SEQUENCE [LARGE SCALE GENOMIC DNA]</scope>
    <source>
        <strain>AH187</strain>
    </source>
</reference>
<organism>
    <name type="scientific">Bacillus cereus (strain AH187)</name>
    <dbReference type="NCBI Taxonomy" id="405534"/>
    <lineage>
        <taxon>Bacteria</taxon>
        <taxon>Bacillati</taxon>
        <taxon>Bacillota</taxon>
        <taxon>Bacilli</taxon>
        <taxon>Bacillales</taxon>
        <taxon>Bacillaceae</taxon>
        <taxon>Bacillus</taxon>
        <taxon>Bacillus cereus group</taxon>
    </lineage>
</organism>
<evidence type="ECO:0000255" key="1">
    <source>
        <dbReference type="HAMAP-Rule" id="MF_00172"/>
    </source>
</evidence>
<keyword id="KW-0028">Amino-acid biosynthesis</keyword>
<keyword id="KW-0479">Metal-binding</keyword>
<keyword id="KW-0486">Methionine biosynthesis</keyword>
<keyword id="KW-0489">Methyltransferase</keyword>
<keyword id="KW-0677">Repeat</keyword>
<keyword id="KW-0808">Transferase</keyword>
<keyword id="KW-0862">Zinc</keyword>
<comment type="function">
    <text evidence="1">Catalyzes the transfer of a methyl group from 5-methyltetrahydrofolate to homocysteine resulting in methionine formation.</text>
</comment>
<comment type="catalytic activity">
    <reaction evidence="1">
        <text>5-methyltetrahydropteroyltri-L-glutamate + L-homocysteine = tetrahydropteroyltri-L-glutamate + L-methionine</text>
        <dbReference type="Rhea" id="RHEA:21196"/>
        <dbReference type="ChEBI" id="CHEBI:57844"/>
        <dbReference type="ChEBI" id="CHEBI:58140"/>
        <dbReference type="ChEBI" id="CHEBI:58199"/>
        <dbReference type="ChEBI" id="CHEBI:58207"/>
        <dbReference type="EC" id="2.1.1.14"/>
    </reaction>
</comment>
<comment type="cofactor">
    <cofactor evidence="1">
        <name>Zn(2+)</name>
        <dbReference type="ChEBI" id="CHEBI:29105"/>
    </cofactor>
    <text evidence="1">Binds 1 zinc ion per subunit.</text>
</comment>
<comment type="pathway">
    <text evidence="1">Amino-acid biosynthesis; L-methionine biosynthesis via de novo pathway; L-methionine from L-homocysteine (MetE route): step 1/1.</text>
</comment>
<comment type="similarity">
    <text evidence="1">Belongs to the vitamin-B12 independent methionine synthase family.</text>
</comment>
<name>METE_BACC7</name>
<accession>B7HMX7</accession>
<protein>
    <recommendedName>
        <fullName evidence="1">5-methyltetrahydropteroyltriglutamate--homocysteine methyltransferase</fullName>
        <ecNumber evidence="1">2.1.1.14</ecNumber>
    </recommendedName>
    <alternativeName>
        <fullName evidence="1">Cobalamin-independent methionine synthase</fullName>
    </alternativeName>
    <alternativeName>
        <fullName evidence="1">Methionine synthase, vitamin-B12 independent isozyme</fullName>
    </alternativeName>
</protein>
<proteinExistence type="inferred from homology"/>